<dbReference type="EC" id="2.1.1.-" evidence="1"/>
<dbReference type="EMBL" id="AE017194">
    <property type="protein sequence ID" value="AAS43294.1"/>
    <property type="molecule type" value="Genomic_DNA"/>
</dbReference>
<dbReference type="SMR" id="Q730M3"/>
<dbReference type="KEGG" id="bca:BCE_4393"/>
<dbReference type="HOGENOM" id="CLU_049382_0_1_9"/>
<dbReference type="Proteomes" id="UP000002527">
    <property type="component" value="Chromosome"/>
</dbReference>
<dbReference type="GO" id="GO:0005737">
    <property type="term" value="C:cytoplasm"/>
    <property type="evidence" value="ECO:0007669"/>
    <property type="project" value="UniProtKB-SubCell"/>
</dbReference>
<dbReference type="GO" id="GO:0016279">
    <property type="term" value="F:protein-lysine N-methyltransferase activity"/>
    <property type="evidence" value="ECO:0007669"/>
    <property type="project" value="RHEA"/>
</dbReference>
<dbReference type="GO" id="GO:0032259">
    <property type="term" value="P:methylation"/>
    <property type="evidence" value="ECO:0007669"/>
    <property type="project" value="UniProtKB-KW"/>
</dbReference>
<dbReference type="CDD" id="cd02440">
    <property type="entry name" value="AdoMet_MTases"/>
    <property type="match status" value="1"/>
</dbReference>
<dbReference type="Gene3D" id="3.40.50.150">
    <property type="entry name" value="Vaccinia Virus protein VP39"/>
    <property type="match status" value="1"/>
</dbReference>
<dbReference type="HAMAP" id="MF_00735">
    <property type="entry name" value="Methyltr_PrmA"/>
    <property type="match status" value="1"/>
</dbReference>
<dbReference type="InterPro" id="IPR050078">
    <property type="entry name" value="Ribosomal_L11_MeTrfase_PrmA"/>
</dbReference>
<dbReference type="InterPro" id="IPR004498">
    <property type="entry name" value="Ribosomal_PrmA_MeTrfase"/>
</dbReference>
<dbReference type="InterPro" id="IPR029063">
    <property type="entry name" value="SAM-dependent_MTases_sf"/>
</dbReference>
<dbReference type="NCBIfam" id="TIGR00406">
    <property type="entry name" value="prmA"/>
    <property type="match status" value="1"/>
</dbReference>
<dbReference type="PANTHER" id="PTHR43648">
    <property type="entry name" value="ELECTRON TRANSFER FLAVOPROTEIN BETA SUBUNIT LYSINE METHYLTRANSFERASE"/>
    <property type="match status" value="1"/>
</dbReference>
<dbReference type="PANTHER" id="PTHR43648:SF1">
    <property type="entry name" value="ELECTRON TRANSFER FLAVOPROTEIN BETA SUBUNIT LYSINE METHYLTRANSFERASE"/>
    <property type="match status" value="1"/>
</dbReference>
<dbReference type="Pfam" id="PF06325">
    <property type="entry name" value="PrmA"/>
    <property type="match status" value="1"/>
</dbReference>
<dbReference type="PIRSF" id="PIRSF000401">
    <property type="entry name" value="RPL11_MTase"/>
    <property type="match status" value="1"/>
</dbReference>
<dbReference type="SUPFAM" id="SSF53335">
    <property type="entry name" value="S-adenosyl-L-methionine-dependent methyltransferases"/>
    <property type="match status" value="1"/>
</dbReference>
<name>PRMA_BACC1</name>
<sequence length="312" mass="33787">MKWSEISIHTKEEAVEAVSHILHEAGASGVAIEDPAELTKEREQQYGEIYALNPDEYPAEGVLIKAYFPQTDSLHETIAGVKSSIDVLPSYDIEIGTGNITVNEVNEEDWATAWKKYYHPVQISDTFTIVPTWEEYTPSSPEEKIIELDPGMAFGTGTHPTTTMCIRALEKTVQQGDTIIDVGTGSGVLSIAAAKLGASSVQAYDLDPVAVESAEMNVRLNKTDDIVSVGQNSLLEGIEGPVDLIVANLLAEIILLFPEDAARVVKSGGLFITSGIIAAKEKVISEALEKAGFTIEEVLRMEDWVAIIARNA</sequence>
<reference key="1">
    <citation type="journal article" date="2004" name="Nucleic Acids Res.">
        <title>The genome sequence of Bacillus cereus ATCC 10987 reveals metabolic adaptations and a large plasmid related to Bacillus anthracis pXO1.</title>
        <authorList>
            <person name="Rasko D.A."/>
            <person name="Ravel J."/>
            <person name="Oekstad O.A."/>
            <person name="Helgason E."/>
            <person name="Cer R.Z."/>
            <person name="Jiang L."/>
            <person name="Shores K.A."/>
            <person name="Fouts D.E."/>
            <person name="Tourasse N.J."/>
            <person name="Angiuoli S.V."/>
            <person name="Kolonay J.F."/>
            <person name="Nelson W.C."/>
            <person name="Kolstoe A.-B."/>
            <person name="Fraser C.M."/>
            <person name="Read T.D."/>
        </authorList>
    </citation>
    <scope>NUCLEOTIDE SEQUENCE [LARGE SCALE GENOMIC DNA]</scope>
    <source>
        <strain>ATCC 10987 / NRS 248</strain>
    </source>
</reference>
<comment type="function">
    <text evidence="1">Methylates ribosomal protein L11.</text>
</comment>
<comment type="catalytic activity">
    <reaction evidence="1">
        <text>L-lysyl-[protein] + 3 S-adenosyl-L-methionine = N(6),N(6),N(6)-trimethyl-L-lysyl-[protein] + 3 S-adenosyl-L-homocysteine + 3 H(+)</text>
        <dbReference type="Rhea" id="RHEA:54192"/>
        <dbReference type="Rhea" id="RHEA-COMP:9752"/>
        <dbReference type="Rhea" id="RHEA-COMP:13826"/>
        <dbReference type="ChEBI" id="CHEBI:15378"/>
        <dbReference type="ChEBI" id="CHEBI:29969"/>
        <dbReference type="ChEBI" id="CHEBI:57856"/>
        <dbReference type="ChEBI" id="CHEBI:59789"/>
        <dbReference type="ChEBI" id="CHEBI:61961"/>
    </reaction>
</comment>
<comment type="subcellular location">
    <subcellularLocation>
        <location evidence="1">Cytoplasm</location>
    </subcellularLocation>
</comment>
<comment type="similarity">
    <text evidence="1">Belongs to the methyltransferase superfamily. PrmA family.</text>
</comment>
<keyword id="KW-0963">Cytoplasm</keyword>
<keyword id="KW-0489">Methyltransferase</keyword>
<keyword id="KW-0949">S-adenosyl-L-methionine</keyword>
<keyword id="KW-0808">Transferase</keyword>
<gene>
    <name evidence="1" type="primary">prmA</name>
    <name type="ordered locus">BCE_4393</name>
</gene>
<feature type="chain" id="PRO_0000192232" description="Ribosomal protein L11 methyltransferase">
    <location>
        <begin position="1"/>
        <end position="312"/>
    </location>
</feature>
<feature type="binding site" evidence="1">
    <location>
        <position position="162"/>
    </location>
    <ligand>
        <name>S-adenosyl-L-methionine</name>
        <dbReference type="ChEBI" id="CHEBI:59789"/>
    </ligand>
</feature>
<feature type="binding site" evidence="1">
    <location>
        <position position="183"/>
    </location>
    <ligand>
        <name>S-adenosyl-L-methionine</name>
        <dbReference type="ChEBI" id="CHEBI:59789"/>
    </ligand>
</feature>
<feature type="binding site" evidence="1">
    <location>
        <position position="205"/>
    </location>
    <ligand>
        <name>S-adenosyl-L-methionine</name>
        <dbReference type="ChEBI" id="CHEBI:59789"/>
    </ligand>
</feature>
<feature type="binding site" evidence="1">
    <location>
        <position position="248"/>
    </location>
    <ligand>
        <name>S-adenosyl-L-methionine</name>
        <dbReference type="ChEBI" id="CHEBI:59789"/>
    </ligand>
</feature>
<proteinExistence type="inferred from homology"/>
<accession>Q730M3</accession>
<protein>
    <recommendedName>
        <fullName evidence="1">Ribosomal protein L11 methyltransferase</fullName>
        <shortName evidence="1">L11 Mtase</shortName>
        <ecNumber evidence="1">2.1.1.-</ecNumber>
    </recommendedName>
</protein>
<evidence type="ECO:0000255" key="1">
    <source>
        <dbReference type="HAMAP-Rule" id="MF_00735"/>
    </source>
</evidence>
<organism>
    <name type="scientific">Bacillus cereus (strain ATCC 10987 / NRS 248)</name>
    <dbReference type="NCBI Taxonomy" id="222523"/>
    <lineage>
        <taxon>Bacteria</taxon>
        <taxon>Bacillati</taxon>
        <taxon>Bacillota</taxon>
        <taxon>Bacilli</taxon>
        <taxon>Bacillales</taxon>
        <taxon>Bacillaceae</taxon>
        <taxon>Bacillus</taxon>
        <taxon>Bacillus cereus group</taxon>
    </lineage>
</organism>